<keyword id="KW-0687">Ribonucleoprotein</keyword>
<keyword id="KW-0689">Ribosomal protein</keyword>
<feature type="chain" id="PRO_0000296553" description="Large ribosomal subunit protein bL32">
    <location>
        <begin position="1"/>
        <end position="65"/>
    </location>
</feature>
<feature type="region of interest" description="Disordered" evidence="2">
    <location>
        <begin position="1"/>
        <end position="32"/>
    </location>
</feature>
<feature type="compositionally biased region" description="Basic residues" evidence="2">
    <location>
        <begin position="1"/>
        <end position="19"/>
    </location>
</feature>
<accession>A1AWD4</accession>
<gene>
    <name evidence="1" type="primary">rpmF</name>
    <name type="ordered locus">Rmag_0485</name>
</gene>
<evidence type="ECO:0000255" key="1">
    <source>
        <dbReference type="HAMAP-Rule" id="MF_00340"/>
    </source>
</evidence>
<evidence type="ECO:0000256" key="2">
    <source>
        <dbReference type="SAM" id="MobiDB-lite"/>
    </source>
</evidence>
<evidence type="ECO:0000305" key="3"/>
<comment type="similarity">
    <text evidence="1">Belongs to the bacterial ribosomal protein bL32 family.</text>
</comment>
<proteinExistence type="inferred from homology"/>
<reference key="1">
    <citation type="journal article" date="2007" name="Science">
        <title>The Calyptogena magnifica chemoautotrophic symbiont genome.</title>
        <authorList>
            <person name="Newton I.L.G."/>
            <person name="Woyke T."/>
            <person name="Auchtung T.A."/>
            <person name="Dilly G.F."/>
            <person name="Dutton R.J."/>
            <person name="Fisher M.C."/>
            <person name="Fontanez K.M."/>
            <person name="Lau E."/>
            <person name="Stewart F.J."/>
            <person name="Richardson P.M."/>
            <person name="Barry K.W."/>
            <person name="Saunders E."/>
            <person name="Detter J.C."/>
            <person name="Wu D."/>
            <person name="Eisen J.A."/>
            <person name="Cavanaugh C.M."/>
        </authorList>
    </citation>
    <scope>NUCLEOTIDE SEQUENCE [LARGE SCALE GENOMIC DNA]</scope>
</reference>
<protein>
    <recommendedName>
        <fullName evidence="1">Large ribosomal subunit protein bL32</fullName>
    </recommendedName>
    <alternativeName>
        <fullName evidence="3">50S ribosomal protein L32</fullName>
    </alternativeName>
</protein>
<name>RL32_RUTMC</name>
<sequence>MAVQKSRKTPSKRGMRRSHNALTNPTLSEDQETGEIHLRHHITVDGYYRGKKVIKKTQDIQEINA</sequence>
<dbReference type="EMBL" id="CP000488">
    <property type="protein sequence ID" value="ABL02241.1"/>
    <property type="molecule type" value="Genomic_DNA"/>
</dbReference>
<dbReference type="RefSeq" id="WP_011737866.1">
    <property type="nucleotide sequence ID" value="NC_008610.1"/>
</dbReference>
<dbReference type="SMR" id="A1AWD4"/>
<dbReference type="STRING" id="413404.Rmag_0485"/>
<dbReference type="KEGG" id="rma:Rmag_0485"/>
<dbReference type="eggNOG" id="COG0333">
    <property type="taxonomic scope" value="Bacteria"/>
</dbReference>
<dbReference type="HOGENOM" id="CLU_129084_2_1_6"/>
<dbReference type="OrthoDB" id="9801927at2"/>
<dbReference type="Proteomes" id="UP000002587">
    <property type="component" value="Chromosome"/>
</dbReference>
<dbReference type="GO" id="GO:0015934">
    <property type="term" value="C:large ribosomal subunit"/>
    <property type="evidence" value="ECO:0007669"/>
    <property type="project" value="InterPro"/>
</dbReference>
<dbReference type="GO" id="GO:0003735">
    <property type="term" value="F:structural constituent of ribosome"/>
    <property type="evidence" value="ECO:0007669"/>
    <property type="project" value="InterPro"/>
</dbReference>
<dbReference type="GO" id="GO:0006412">
    <property type="term" value="P:translation"/>
    <property type="evidence" value="ECO:0007669"/>
    <property type="project" value="UniProtKB-UniRule"/>
</dbReference>
<dbReference type="HAMAP" id="MF_00340">
    <property type="entry name" value="Ribosomal_bL32"/>
    <property type="match status" value="1"/>
</dbReference>
<dbReference type="InterPro" id="IPR002677">
    <property type="entry name" value="Ribosomal_bL32"/>
</dbReference>
<dbReference type="InterPro" id="IPR044957">
    <property type="entry name" value="Ribosomal_bL32_bact"/>
</dbReference>
<dbReference type="InterPro" id="IPR011332">
    <property type="entry name" value="Ribosomal_zn-bd"/>
</dbReference>
<dbReference type="NCBIfam" id="TIGR01031">
    <property type="entry name" value="rpmF_bact"/>
    <property type="match status" value="1"/>
</dbReference>
<dbReference type="PANTHER" id="PTHR35534">
    <property type="entry name" value="50S RIBOSOMAL PROTEIN L32"/>
    <property type="match status" value="1"/>
</dbReference>
<dbReference type="PANTHER" id="PTHR35534:SF1">
    <property type="entry name" value="LARGE RIBOSOMAL SUBUNIT PROTEIN BL32"/>
    <property type="match status" value="1"/>
</dbReference>
<dbReference type="Pfam" id="PF01783">
    <property type="entry name" value="Ribosomal_L32p"/>
    <property type="match status" value="1"/>
</dbReference>
<dbReference type="SUPFAM" id="SSF57829">
    <property type="entry name" value="Zn-binding ribosomal proteins"/>
    <property type="match status" value="1"/>
</dbReference>
<organism>
    <name type="scientific">Ruthia magnifica subsp. Calyptogena magnifica</name>
    <dbReference type="NCBI Taxonomy" id="413404"/>
    <lineage>
        <taxon>Bacteria</taxon>
        <taxon>Pseudomonadati</taxon>
        <taxon>Pseudomonadota</taxon>
        <taxon>Gammaproteobacteria</taxon>
        <taxon>Candidatus Pseudothioglobaceae</taxon>
        <taxon>Candidatus Ruthturnera</taxon>
    </lineage>
</organism>